<keyword id="KW-0028">Amino-acid biosynthesis</keyword>
<keyword id="KW-0057">Aromatic amino acid biosynthesis</keyword>
<keyword id="KW-0963">Cytoplasm</keyword>
<keyword id="KW-1185">Reference proteome</keyword>
<keyword id="KW-0808">Transferase</keyword>
<organism>
    <name type="scientific">Campylobacter curvus (strain 525.92)</name>
    <dbReference type="NCBI Taxonomy" id="360105"/>
    <lineage>
        <taxon>Bacteria</taxon>
        <taxon>Pseudomonadati</taxon>
        <taxon>Campylobacterota</taxon>
        <taxon>Epsilonproteobacteria</taxon>
        <taxon>Campylobacterales</taxon>
        <taxon>Campylobacteraceae</taxon>
        <taxon>Campylobacter</taxon>
    </lineage>
</organism>
<protein>
    <recommendedName>
        <fullName evidence="1">3-phosphoshikimate 1-carboxyvinyltransferase</fullName>
        <ecNumber evidence="1">2.5.1.19</ecNumber>
    </recommendedName>
    <alternativeName>
        <fullName evidence="1">5-enolpyruvylshikimate-3-phosphate synthase</fullName>
        <shortName evidence="1">EPSP synthase</shortName>
        <shortName evidence="1">EPSPS</shortName>
    </alternativeName>
</protein>
<reference key="1">
    <citation type="submission" date="2007-07" db="EMBL/GenBank/DDBJ databases">
        <title>Genome sequence of Campylobacter curvus 525.92 isolated from human feces.</title>
        <authorList>
            <person name="Fouts D.E."/>
            <person name="Mongodin E.F."/>
            <person name="Puiu D."/>
            <person name="Sebastian Y."/>
            <person name="Miller W.G."/>
            <person name="Mandrell R.E."/>
            <person name="Lastovica A.J."/>
            <person name="Nelson K.E."/>
        </authorList>
    </citation>
    <scope>NUCLEOTIDE SEQUENCE [LARGE SCALE GENOMIC DNA]</scope>
    <source>
        <strain>525.92</strain>
    </source>
</reference>
<gene>
    <name evidence="1" type="primary">aroA</name>
    <name type="ordered locus">Ccur92_05520</name>
    <name type="ORF">CCV52592_0516</name>
</gene>
<feature type="chain" id="PRO_1000012421" description="3-phosphoshikimate 1-carboxyvinyltransferase">
    <location>
        <begin position="1"/>
        <end position="424"/>
    </location>
</feature>
<feature type="active site" description="Proton acceptor" evidence="1">
    <location>
        <position position="310"/>
    </location>
</feature>
<feature type="binding site" evidence="1">
    <location>
        <position position="21"/>
    </location>
    <ligand>
        <name>3-phosphoshikimate</name>
        <dbReference type="ChEBI" id="CHEBI:145989"/>
    </ligand>
</feature>
<feature type="binding site" evidence="1">
    <location>
        <position position="21"/>
    </location>
    <ligand>
        <name>phosphoenolpyruvate</name>
        <dbReference type="ChEBI" id="CHEBI:58702"/>
    </ligand>
</feature>
<feature type="binding site" evidence="1">
    <location>
        <position position="22"/>
    </location>
    <ligand>
        <name>3-phosphoshikimate</name>
        <dbReference type="ChEBI" id="CHEBI:145989"/>
    </ligand>
</feature>
<feature type="binding site" evidence="1">
    <location>
        <position position="26"/>
    </location>
    <ligand>
        <name>3-phosphoshikimate</name>
        <dbReference type="ChEBI" id="CHEBI:145989"/>
    </ligand>
</feature>
<feature type="binding site" evidence="1">
    <location>
        <position position="91"/>
    </location>
    <ligand>
        <name>phosphoenolpyruvate</name>
        <dbReference type="ChEBI" id="CHEBI:58702"/>
    </ligand>
</feature>
<feature type="binding site" evidence="1">
    <location>
        <position position="119"/>
    </location>
    <ligand>
        <name>phosphoenolpyruvate</name>
        <dbReference type="ChEBI" id="CHEBI:58702"/>
    </ligand>
</feature>
<feature type="binding site" evidence="1">
    <location>
        <position position="164"/>
    </location>
    <ligand>
        <name>3-phosphoshikimate</name>
        <dbReference type="ChEBI" id="CHEBI:145989"/>
    </ligand>
</feature>
<feature type="binding site" evidence="1">
    <location>
        <position position="166"/>
    </location>
    <ligand>
        <name>3-phosphoshikimate</name>
        <dbReference type="ChEBI" id="CHEBI:145989"/>
    </ligand>
</feature>
<feature type="binding site" evidence="1">
    <location>
        <position position="166"/>
    </location>
    <ligand>
        <name>phosphoenolpyruvate</name>
        <dbReference type="ChEBI" id="CHEBI:58702"/>
    </ligand>
</feature>
<feature type="binding site" evidence="1">
    <location>
        <position position="310"/>
    </location>
    <ligand>
        <name>3-phosphoshikimate</name>
        <dbReference type="ChEBI" id="CHEBI:145989"/>
    </ligand>
</feature>
<feature type="binding site" evidence="1">
    <location>
        <position position="337"/>
    </location>
    <ligand>
        <name>3-phosphoshikimate</name>
        <dbReference type="ChEBI" id="CHEBI:145989"/>
    </ligand>
</feature>
<feature type="binding site" evidence="1">
    <location>
        <position position="341"/>
    </location>
    <ligand>
        <name>phosphoenolpyruvate</name>
        <dbReference type="ChEBI" id="CHEBI:58702"/>
    </ligand>
</feature>
<feature type="binding site" evidence="1">
    <location>
        <position position="382"/>
    </location>
    <ligand>
        <name>phosphoenolpyruvate</name>
        <dbReference type="ChEBI" id="CHEBI:58702"/>
    </ligand>
</feature>
<sequence length="424" mass="45966">MKVRILNEPINVELSRIAADKSISHRCAIFSLLSDKPSHVRNYLKAGDTLNTLDIVRTLGAQIQERGEEVIITPPEKILEPDVVLECGNSGTSMRLFMGLLAAQDGFFVLSGDKYLNRRPMARVAKPLVAVGAKIDGANEANTAPLCIRGKKLERFKYDSPVASAQVKSALLLAALYSNGCEFSEPELSRDHTERMLKGMGAKIKTQGASIALEPMSTPLAPLDIDVPNDPSSAFFFAVAACIIPNSHIVLKNVLLNETRIEAYKILQKMGADIKFKEISGKYESIGDIEIRYAALNAVEVSENISWLIDEAPALAIAFANAKGTSVLKNAKELRVKECDRIAVTVAGLKKCGIKARELEDGFEVSGSDASCAIIDSHGDHRIAMSFAVLGLKCGMIIEKSEFIATSFPNFVSILRKIGASVED</sequence>
<dbReference type="EC" id="2.5.1.19" evidence="1"/>
<dbReference type="EMBL" id="CP000767">
    <property type="protein sequence ID" value="EAU00796.1"/>
    <property type="molecule type" value="Genomic_DNA"/>
</dbReference>
<dbReference type="RefSeq" id="WP_011992030.1">
    <property type="nucleotide sequence ID" value="NC_009715.2"/>
</dbReference>
<dbReference type="SMR" id="A7GXB4"/>
<dbReference type="STRING" id="360105.CCV52592_0516"/>
<dbReference type="KEGG" id="ccv:CCV52592_0516"/>
<dbReference type="HOGENOM" id="CLU_024321_0_1_7"/>
<dbReference type="OrthoDB" id="9809920at2"/>
<dbReference type="UniPathway" id="UPA00053">
    <property type="reaction ID" value="UER00089"/>
</dbReference>
<dbReference type="Proteomes" id="UP000006380">
    <property type="component" value="Chromosome"/>
</dbReference>
<dbReference type="GO" id="GO:0005737">
    <property type="term" value="C:cytoplasm"/>
    <property type="evidence" value="ECO:0007669"/>
    <property type="project" value="UniProtKB-SubCell"/>
</dbReference>
<dbReference type="GO" id="GO:0003866">
    <property type="term" value="F:3-phosphoshikimate 1-carboxyvinyltransferase activity"/>
    <property type="evidence" value="ECO:0007669"/>
    <property type="project" value="UniProtKB-UniRule"/>
</dbReference>
<dbReference type="GO" id="GO:0008652">
    <property type="term" value="P:amino acid biosynthetic process"/>
    <property type="evidence" value="ECO:0007669"/>
    <property type="project" value="UniProtKB-KW"/>
</dbReference>
<dbReference type="GO" id="GO:0009073">
    <property type="term" value="P:aromatic amino acid family biosynthetic process"/>
    <property type="evidence" value="ECO:0007669"/>
    <property type="project" value="UniProtKB-KW"/>
</dbReference>
<dbReference type="GO" id="GO:0009423">
    <property type="term" value="P:chorismate biosynthetic process"/>
    <property type="evidence" value="ECO:0007669"/>
    <property type="project" value="UniProtKB-UniRule"/>
</dbReference>
<dbReference type="CDD" id="cd01556">
    <property type="entry name" value="EPSP_synthase"/>
    <property type="match status" value="1"/>
</dbReference>
<dbReference type="FunFam" id="3.65.10.10:FF:000005">
    <property type="entry name" value="3-phosphoshikimate 1-carboxyvinyltransferase"/>
    <property type="match status" value="1"/>
</dbReference>
<dbReference type="Gene3D" id="3.65.10.10">
    <property type="entry name" value="Enolpyruvate transferase domain"/>
    <property type="match status" value="2"/>
</dbReference>
<dbReference type="HAMAP" id="MF_00210">
    <property type="entry name" value="EPSP_synth"/>
    <property type="match status" value="1"/>
</dbReference>
<dbReference type="InterPro" id="IPR001986">
    <property type="entry name" value="Enolpyruvate_Tfrase_dom"/>
</dbReference>
<dbReference type="InterPro" id="IPR036968">
    <property type="entry name" value="Enolpyruvate_Tfrase_sf"/>
</dbReference>
<dbReference type="InterPro" id="IPR006264">
    <property type="entry name" value="EPSP_synthase"/>
</dbReference>
<dbReference type="InterPro" id="IPR023193">
    <property type="entry name" value="EPSP_synthase_CS"/>
</dbReference>
<dbReference type="InterPro" id="IPR013792">
    <property type="entry name" value="RNA3'P_cycl/enolpyr_Trfase_a/b"/>
</dbReference>
<dbReference type="NCBIfam" id="TIGR01356">
    <property type="entry name" value="aroA"/>
    <property type="match status" value="1"/>
</dbReference>
<dbReference type="PANTHER" id="PTHR21090">
    <property type="entry name" value="AROM/DEHYDROQUINATE SYNTHASE"/>
    <property type="match status" value="1"/>
</dbReference>
<dbReference type="PANTHER" id="PTHR21090:SF5">
    <property type="entry name" value="PENTAFUNCTIONAL AROM POLYPEPTIDE"/>
    <property type="match status" value="1"/>
</dbReference>
<dbReference type="Pfam" id="PF00275">
    <property type="entry name" value="EPSP_synthase"/>
    <property type="match status" value="1"/>
</dbReference>
<dbReference type="PIRSF" id="PIRSF000505">
    <property type="entry name" value="EPSPS"/>
    <property type="match status" value="1"/>
</dbReference>
<dbReference type="SUPFAM" id="SSF55205">
    <property type="entry name" value="EPT/RTPC-like"/>
    <property type="match status" value="1"/>
</dbReference>
<dbReference type="PROSITE" id="PS00104">
    <property type="entry name" value="EPSP_SYNTHASE_1"/>
    <property type="match status" value="1"/>
</dbReference>
<dbReference type="PROSITE" id="PS00885">
    <property type="entry name" value="EPSP_SYNTHASE_2"/>
    <property type="match status" value="1"/>
</dbReference>
<proteinExistence type="inferred from homology"/>
<name>AROA_CAMC5</name>
<accession>A7GXB4</accession>
<comment type="function">
    <text evidence="1">Catalyzes the transfer of the enolpyruvyl moiety of phosphoenolpyruvate (PEP) to the 5-hydroxyl of shikimate-3-phosphate (S3P) to produce enolpyruvyl shikimate-3-phosphate and inorganic phosphate.</text>
</comment>
<comment type="catalytic activity">
    <reaction evidence="1">
        <text>3-phosphoshikimate + phosphoenolpyruvate = 5-O-(1-carboxyvinyl)-3-phosphoshikimate + phosphate</text>
        <dbReference type="Rhea" id="RHEA:21256"/>
        <dbReference type="ChEBI" id="CHEBI:43474"/>
        <dbReference type="ChEBI" id="CHEBI:57701"/>
        <dbReference type="ChEBI" id="CHEBI:58702"/>
        <dbReference type="ChEBI" id="CHEBI:145989"/>
        <dbReference type="EC" id="2.5.1.19"/>
    </reaction>
    <physiologicalReaction direction="left-to-right" evidence="1">
        <dbReference type="Rhea" id="RHEA:21257"/>
    </physiologicalReaction>
</comment>
<comment type="pathway">
    <text evidence="1">Metabolic intermediate biosynthesis; chorismate biosynthesis; chorismate from D-erythrose 4-phosphate and phosphoenolpyruvate: step 6/7.</text>
</comment>
<comment type="subunit">
    <text evidence="1">Monomer.</text>
</comment>
<comment type="subcellular location">
    <subcellularLocation>
        <location evidence="1">Cytoplasm</location>
    </subcellularLocation>
</comment>
<comment type="similarity">
    <text evidence="1">Belongs to the EPSP synthase family.</text>
</comment>
<evidence type="ECO:0000255" key="1">
    <source>
        <dbReference type="HAMAP-Rule" id="MF_00210"/>
    </source>
</evidence>